<reference key="1">
    <citation type="journal article" date="1992" name="Biochem. Biophys. Res. Commun.">
        <title>Androgen-responsive expression and mitogenic activity of schwannoma-derived growth factor on an androgen-dependent Shionogi mouse mammary carcinoma cell line.</title>
        <authorList>
            <person name="Sonoda H."/>
            <person name="Yamaguchi T."/>
            <person name="Watanabe S."/>
        </authorList>
    </citation>
    <scope>NUCLEOTIDE SEQUENCE [MRNA]</scope>
</reference>
<reference key="2">
    <citation type="journal article" date="1995" name="Mol. Endocrinol.">
        <title>Amphiregulin is an implantation-specific and progesterone-regulated gene in the mouse uterus.</title>
        <authorList>
            <person name="Das S.K."/>
            <person name="Chakraborty I."/>
            <person name="Paria B.C."/>
            <person name="Wang X.N."/>
            <person name="Plowman G.D."/>
            <person name="Dey S.K."/>
        </authorList>
    </citation>
    <scope>NUCLEOTIDE SEQUENCE [GENOMIC DNA]</scope>
</reference>
<reference key="3">
    <citation type="journal article" date="2005" name="Science">
        <title>The transcriptional landscape of the mammalian genome.</title>
        <authorList>
            <person name="Carninci P."/>
            <person name="Kasukawa T."/>
            <person name="Katayama S."/>
            <person name="Gough J."/>
            <person name="Frith M.C."/>
            <person name="Maeda N."/>
            <person name="Oyama R."/>
            <person name="Ravasi T."/>
            <person name="Lenhard B."/>
            <person name="Wells C."/>
            <person name="Kodzius R."/>
            <person name="Shimokawa K."/>
            <person name="Bajic V.B."/>
            <person name="Brenner S.E."/>
            <person name="Batalov S."/>
            <person name="Forrest A.R."/>
            <person name="Zavolan M."/>
            <person name="Davis M.J."/>
            <person name="Wilming L.G."/>
            <person name="Aidinis V."/>
            <person name="Allen J.E."/>
            <person name="Ambesi-Impiombato A."/>
            <person name="Apweiler R."/>
            <person name="Aturaliya R.N."/>
            <person name="Bailey T.L."/>
            <person name="Bansal M."/>
            <person name="Baxter L."/>
            <person name="Beisel K.W."/>
            <person name="Bersano T."/>
            <person name="Bono H."/>
            <person name="Chalk A.M."/>
            <person name="Chiu K.P."/>
            <person name="Choudhary V."/>
            <person name="Christoffels A."/>
            <person name="Clutterbuck D.R."/>
            <person name="Crowe M.L."/>
            <person name="Dalla E."/>
            <person name="Dalrymple B.P."/>
            <person name="de Bono B."/>
            <person name="Della Gatta G."/>
            <person name="di Bernardo D."/>
            <person name="Down T."/>
            <person name="Engstrom P."/>
            <person name="Fagiolini M."/>
            <person name="Faulkner G."/>
            <person name="Fletcher C.F."/>
            <person name="Fukushima T."/>
            <person name="Furuno M."/>
            <person name="Futaki S."/>
            <person name="Gariboldi M."/>
            <person name="Georgii-Hemming P."/>
            <person name="Gingeras T.R."/>
            <person name="Gojobori T."/>
            <person name="Green R.E."/>
            <person name="Gustincich S."/>
            <person name="Harbers M."/>
            <person name="Hayashi Y."/>
            <person name="Hensch T.K."/>
            <person name="Hirokawa N."/>
            <person name="Hill D."/>
            <person name="Huminiecki L."/>
            <person name="Iacono M."/>
            <person name="Ikeo K."/>
            <person name="Iwama A."/>
            <person name="Ishikawa T."/>
            <person name="Jakt M."/>
            <person name="Kanapin A."/>
            <person name="Katoh M."/>
            <person name="Kawasawa Y."/>
            <person name="Kelso J."/>
            <person name="Kitamura H."/>
            <person name="Kitano H."/>
            <person name="Kollias G."/>
            <person name="Krishnan S.P."/>
            <person name="Kruger A."/>
            <person name="Kummerfeld S.K."/>
            <person name="Kurochkin I.V."/>
            <person name="Lareau L.F."/>
            <person name="Lazarevic D."/>
            <person name="Lipovich L."/>
            <person name="Liu J."/>
            <person name="Liuni S."/>
            <person name="McWilliam S."/>
            <person name="Madan Babu M."/>
            <person name="Madera M."/>
            <person name="Marchionni L."/>
            <person name="Matsuda H."/>
            <person name="Matsuzawa S."/>
            <person name="Miki H."/>
            <person name="Mignone F."/>
            <person name="Miyake S."/>
            <person name="Morris K."/>
            <person name="Mottagui-Tabar S."/>
            <person name="Mulder N."/>
            <person name="Nakano N."/>
            <person name="Nakauchi H."/>
            <person name="Ng P."/>
            <person name="Nilsson R."/>
            <person name="Nishiguchi S."/>
            <person name="Nishikawa S."/>
            <person name="Nori F."/>
            <person name="Ohara O."/>
            <person name="Okazaki Y."/>
            <person name="Orlando V."/>
            <person name="Pang K.C."/>
            <person name="Pavan W.J."/>
            <person name="Pavesi G."/>
            <person name="Pesole G."/>
            <person name="Petrovsky N."/>
            <person name="Piazza S."/>
            <person name="Reed J."/>
            <person name="Reid J.F."/>
            <person name="Ring B.Z."/>
            <person name="Ringwald M."/>
            <person name="Rost B."/>
            <person name="Ruan Y."/>
            <person name="Salzberg S.L."/>
            <person name="Sandelin A."/>
            <person name="Schneider C."/>
            <person name="Schoenbach C."/>
            <person name="Sekiguchi K."/>
            <person name="Semple C.A."/>
            <person name="Seno S."/>
            <person name="Sessa L."/>
            <person name="Sheng Y."/>
            <person name="Shibata Y."/>
            <person name="Shimada H."/>
            <person name="Shimada K."/>
            <person name="Silva D."/>
            <person name="Sinclair B."/>
            <person name="Sperling S."/>
            <person name="Stupka E."/>
            <person name="Sugiura K."/>
            <person name="Sultana R."/>
            <person name="Takenaka Y."/>
            <person name="Taki K."/>
            <person name="Tammoja K."/>
            <person name="Tan S.L."/>
            <person name="Tang S."/>
            <person name="Taylor M.S."/>
            <person name="Tegner J."/>
            <person name="Teichmann S.A."/>
            <person name="Ueda H.R."/>
            <person name="van Nimwegen E."/>
            <person name="Verardo R."/>
            <person name="Wei C.L."/>
            <person name="Yagi K."/>
            <person name="Yamanishi H."/>
            <person name="Zabarovsky E."/>
            <person name="Zhu S."/>
            <person name="Zimmer A."/>
            <person name="Hide W."/>
            <person name="Bult C."/>
            <person name="Grimmond S.M."/>
            <person name="Teasdale R.D."/>
            <person name="Liu E.T."/>
            <person name="Brusic V."/>
            <person name="Quackenbush J."/>
            <person name="Wahlestedt C."/>
            <person name="Mattick J.S."/>
            <person name="Hume D.A."/>
            <person name="Kai C."/>
            <person name="Sasaki D."/>
            <person name="Tomaru Y."/>
            <person name="Fukuda S."/>
            <person name="Kanamori-Katayama M."/>
            <person name="Suzuki M."/>
            <person name="Aoki J."/>
            <person name="Arakawa T."/>
            <person name="Iida J."/>
            <person name="Imamura K."/>
            <person name="Itoh M."/>
            <person name="Kato T."/>
            <person name="Kawaji H."/>
            <person name="Kawagashira N."/>
            <person name="Kawashima T."/>
            <person name="Kojima M."/>
            <person name="Kondo S."/>
            <person name="Konno H."/>
            <person name="Nakano K."/>
            <person name="Ninomiya N."/>
            <person name="Nishio T."/>
            <person name="Okada M."/>
            <person name="Plessy C."/>
            <person name="Shibata K."/>
            <person name="Shiraki T."/>
            <person name="Suzuki S."/>
            <person name="Tagami M."/>
            <person name="Waki K."/>
            <person name="Watahiki A."/>
            <person name="Okamura-Oho Y."/>
            <person name="Suzuki H."/>
            <person name="Kawai J."/>
            <person name="Hayashizaki Y."/>
        </authorList>
    </citation>
    <scope>NUCLEOTIDE SEQUENCE [LARGE SCALE MRNA]</scope>
    <source>
        <strain>C57BL/6J</strain>
        <tissue>Cecum</tissue>
    </source>
</reference>
<reference key="4">
    <citation type="journal article" date="2004" name="Genome Res.">
        <title>The status, quality, and expansion of the NIH full-length cDNA project: the Mammalian Gene Collection (MGC).</title>
        <authorList>
            <consortium name="The MGC Project Team"/>
        </authorList>
    </citation>
    <scope>NUCLEOTIDE SEQUENCE [LARGE SCALE MRNA]</scope>
    <source>
        <strain>FVB/N</strain>
        <tissue>Mammary gland</tissue>
    </source>
</reference>
<organism>
    <name type="scientific">Mus musculus</name>
    <name type="common">Mouse</name>
    <dbReference type="NCBI Taxonomy" id="10090"/>
    <lineage>
        <taxon>Eukaryota</taxon>
        <taxon>Metazoa</taxon>
        <taxon>Chordata</taxon>
        <taxon>Craniata</taxon>
        <taxon>Vertebrata</taxon>
        <taxon>Euteleostomi</taxon>
        <taxon>Mammalia</taxon>
        <taxon>Eutheria</taxon>
        <taxon>Euarchontoglires</taxon>
        <taxon>Glires</taxon>
        <taxon>Rodentia</taxon>
        <taxon>Myomorpha</taxon>
        <taxon>Muroidea</taxon>
        <taxon>Muridae</taxon>
        <taxon>Murinae</taxon>
        <taxon>Mus</taxon>
        <taxon>Mus</taxon>
    </lineage>
</organism>
<feature type="signal peptide" evidence="2">
    <location>
        <begin position="1"/>
        <end position="26"/>
    </location>
</feature>
<feature type="propeptide" id="PRO_0000007476">
    <location>
        <begin position="27"/>
        <end position="99"/>
    </location>
</feature>
<feature type="chain" id="PRO_0000007477" description="Amphiregulin">
    <location>
        <begin position="100"/>
        <end position="248"/>
    </location>
</feature>
<feature type="transmembrane region" description="Helical" evidence="2">
    <location>
        <begin position="192"/>
        <end position="215"/>
    </location>
</feature>
<feature type="domain" description="EGF-like" evidence="3">
    <location>
        <begin position="135"/>
        <end position="175"/>
    </location>
</feature>
<feature type="region of interest" description="Disordered" evidence="4">
    <location>
        <begin position="29"/>
        <end position="48"/>
    </location>
</feature>
<feature type="region of interest" description="Disordered" evidence="4">
    <location>
        <begin position="57"/>
        <end position="77"/>
    </location>
</feature>
<feature type="region of interest" description="Disordered" evidence="4">
    <location>
        <begin position="100"/>
        <end position="136"/>
    </location>
</feature>
<feature type="compositionally biased region" description="Polar residues" evidence="4">
    <location>
        <begin position="58"/>
        <end position="70"/>
    </location>
</feature>
<feature type="compositionally biased region" description="Basic and acidic residues" evidence="4">
    <location>
        <begin position="100"/>
        <end position="116"/>
    </location>
</feature>
<feature type="compositionally biased region" description="Basic residues" evidence="4">
    <location>
        <begin position="117"/>
        <end position="136"/>
    </location>
</feature>
<feature type="glycosylation site" description="N-linked (GlcNAc...) asparagine" evidence="2">
    <location>
        <position position="106"/>
    </location>
</feature>
<feature type="glycosylation site" description="N-linked (GlcNAc...) asparagine" evidence="2">
    <location>
        <position position="241"/>
    </location>
</feature>
<feature type="disulfide bond" evidence="3">
    <location>
        <begin position="139"/>
        <end position="152"/>
    </location>
</feature>
<feature type="disulfide bond" evidence="3">
    <location>
        <begin position="147"/>
        <end position="163"/>
    </location>
</feature>
<feature type="disulfide bond" evidence="3">
    <location>
        <begin position="165"/>
        <end position="174"/>
    </location>
</feature>
<sequence>MRTPLLPLARSVLLLLVLGSGHYAAALELNDPSSGKGESLSGDHSAGGLELSVGREVSTISEMPSGSELSTGDYDYSEEYDNEPQISGYIIDDSVRVEQVIKPKKNKTEGEKSTEKPKRKKKGGKNGKGRRNKKKKNPCTAKFQNFCIHGECRYIENLEVVTCNCHQDYFGERCGEKSMKTHSEDDKDLSKIAVVAVTIFVSAIILAAIGIGIVITVHLWKRYFREYEGETEERRRLRQENGTVHAIA</sequence>
<gene>
    <name type="primary">Areg</name>
    <name type="synonym">Sdgf</name>
</gene>
<protein>
    <recommendedName>
        <fullName>Amphiregulin</fullName>
        <shortName>AR</shortName>
    </recommendedName>
    <alternativeName>
        <fullName>Schwannoma-derived growth factor</fullName>
        <shortName>SDGF</shortName>
    </alternativeName>
</protein>
<accession>P31955</accession>
<comment type="function">
    <text>Ligand of the EGF receptor/EGFR. Autocrine growth factor as well as a mitogen for a broad range of target cells including astrocytes, Schwann cells and fibroblasts.</text>
</comment>
<comment type="subunit">
    <text evidence="1">The immature precursor interacts with CNIH.</text>
</comment>
<comment type="subcellular location">
    <subcellularLocation>
        <location>Membrane</location>
        <topology>Single-pass membrane protein</topology>
    </subcellularLocation>
</comment>
<comment type="induction">
    <text>Androgen-dependent.</text>
</comment>
<comment type="similarity">
    <text evidence="5">Belongs to the amphiregulin family.</text>
</comment>
<name>AREG_MOUSE</name>
<proteinExistence type="evidence at transcript level"/>
<evidence type="ECO:0000250" key="1"/>
<evidence type="ECO:0000255" key="2"/>
<evidence type="ECO:0000255" key="3">
    <source>
        <dbReference type="PROSITE-ProRule" id="PRU00076"/>
    </source>
</evidence>
<evidence type="ECO:0000256" key="4">
    <source>
        <dbReference type="SAM" id="MobiDB-lite"/>
    </source>
</evidence>
<evidence type="ECO:0000305" key="5"/>
<keyword id="KW-0202">Cytokine</keyword>
<keyword id="KW-1015">Disulfide bond</keyword>
<keyword id="KW-0245">EGF-like domain</keyword>
<keyword id="KW-0325">Glycoprotein</keyword>
<keyword id="KW-0339">Growth factor</keyword>
<keyword id="KW-0472">Membrane</keyword>
<keyword id="KW-1185">Reference proteome</keyword>
<keyword id="KW-0732">Signal</keyword>
<keyword id="KW-0812">Transmembrane</keyword>
<keyword id="KW-1133">Transmembrane helix</keyword>
<dbReference type="EMBL" id="D12648">
    <property type="protein sequence ID" value="BAA02169.1"/>
    <property type="molecule type" value="mRNA"/>
</dbReference>
<dbReference type="EMBL" id="L41352">
    <property type="protein sequence ID" value="AAB00472.1"/>
    <property type="molecule type" value="Genomic_DNA"/>
</dbReference>
<dbReference type="EMBL" id="AK018590">
    <property type="protein sequence ID" value="BAB31296.1"/>
    <property type="molecule type" value="mRNA"/>
</dbReference>
<dbReference type="EMBL" id="BC009138">
    <property type="protein sequence ID" value="AAH09138.1"/>
    <property type="molecule type" value="mRNA"/>
</dbReference>
<dbReference type="CCDS" id="CCDS19421.1"/>
<dbReference type="PIR" id="JH0612">
    <property type="entry name" value="JH0612"/>
</dbReference>
<dbReference type="RefSeq" id="NP_033834.1">
    <property type="nucleotide sequence ID" value="NM_009704.4"/>
</dbReference>
<dbReference type="SMR" id="P31955"/>
<dbReference type="FunCoup" id="P31955">
    <property type="interactions" value="986"/>
</dbReference>
<dbReference type="STRING" id="10090.ENSMUSP00000031325"/>
<dbReference type="GlyCosmos" id="P31955">
    <property type="glycosylation" value="2 sites, No reported glycans"/>
</dbReference>
<dbReference type="GlyGen" id="P31955">
    <property type="glycosylation" value="2 sites"/>
</dbReference>
<dbReference type="iPTMnet" id="P31955"/>
<dbReference type="PhosphoSitePlus" id="P31955"/>
<dbReference type="PaxDb" id="10090-ENSMUSP00000031325"/>
<dbReference type="ProteomicsDB" id="277271"/>
<dbReference type="Antibodypedia" id="1919">
    <property type="antibodies" value="585 antibodies from 36 providers"/>
</dbReference>
<dbReference type="DNASU" id="11839"/>
<dbReference type="Ensembl" id="ENSMUST00000031325.6">
    <property type="protein sequence ID" value="ENSMUSP00000031325.5"/>
    <property type="gene ID" value="ENSMUSG00000029378.6"/>
</dbReference>
<dbReference type="GeneID" id="11839"/>
<dbReference type="KEGG" id="mmu:11839"/>
<dbReference type="UCSC" id="uc008ybt.1">
    <property type="organism name" value="mouse"/>
</dbReference>
<dbReference type="AGR" id="MGI:88068"/>
<dbReference type="CTD" id="374"/>
<dbReference type="MGI" id="MGI:88068">
    <property type="gene designation" value="Areg"/>
</dbReference>
<dbReference type="VEuPathDB" id="HostDB:ENSMUSG00000029378"/>
<dbReference type="eggNOG" id="ENOG502S0KA">
    <property type="taxonomic scope" value="Eukaryota"/>
</dbReference>
<dbReference type="GeneTree" id="ENSGT00940000160696"/>
<dbReference type="HOGENOM" id="CLU_096527_1_0_1"/>
<dbReference type="InParanoid" id="P31955"/>
<dbReference type="OMA" id="CHHDYFG"/>
<dbReference type="OrthoDB" id="9909110at2759"/>
<dbReference type="PhylomeDB" id="P31955"/>
<dbReference type="TreeFam" id="TF332773"/>
<dbReference type="Reactome" id="R-MMU-1257604">
    <property type="pathway name" value="PIP3 activates AKT signaling"/>
</dbReference>
<dbReference type="Reactome" id="R-MMU-177929">
    <property type="pathway name" value="Signaling by EGFR"/>
</dbReference>
<dbReference type="Reactome" id="R-MMU-179812">
    <property type="pathway name" value="GRB2 events in EGFR signaling"/>
</dbReference>
<dbReference type="Reactome" id="R-MMU-180292">
    <property type="pathway name" value="GAB1 signalosome"/>
</dbReference>
<dbReference type="Reactome" id="R-MMU-180336">
    <property type="pathway name" value="SHC1 events in EGFR signaling"/>
</dbReference>
<dbReference type="Reactome" id="R-MMU-182971">
    <property type="pathway name" value="EGFR downregulation"/>
</dbReference>
<dbReference type="Reactome" id="R-MMU-204005">
    <property type="pathway name" value="COPII-mediated vesicle transport"/>
</dbReference>
<dbReference type="Reactome" id="R-MMU-212718">
    <property type="pathway name" value="EGFR interacts with phospholipase C-gamma"/>
</dbReference>
<dbReference type="Reactome" id="R-MMU-5673001">
    <property type="pathway name" value="RAF/MAP kinase cascade"/>
</dbReference>
<dbReference type="Reactome" id="R-MMU-5694530">
    <property type="pathway name" value="Cargo concentration in the ER"/>
</dbReference>
<dbReference type="Reactome" id="R-MMU-6811558">
    <property type="pathway name" value="PI5P, PP2A and IER3 Regulate PI3K/AKT Signaling"/>
</dbReference>
<dbReference type="Reactome" id="R-MMU-8856825">
    <property type="pathway name" value="Cargo recognition for clathrin-mediated endocytosis"/>
</dbReference>
<dbReference type="Reactome" id="R-MMU-8856828">
    <property type="pathway name" value="Clathrin-mediated endocytosis"/>
</dbReference>
<dbReference type="Reactome" id="R-MMU-9009391">
    <property type="pathway name" value="Extra-nuclear estrogen signaling"/>
</dbReference>
<dbReference type="BioGRID-ORCS" id="11839">
    <property type="hits" value="2 hits in 80 CRISPR screens"/>
</dbReference>
<dbReference type="ChiTaRS" id="Areg">
    <property type="organism name" value="mouse"/>
</dbReference>
<dbReference type="PRO" id="PR:P31955"/>
<dbReference type="Proteomes" id="UP000000589">
    <property type="component" value="Chromosome 5"/>
</dbReference>
<dbReference type="RNAct" id="P31955">
    <property type="molecule type" value="protein"/>
</dbReference>
<dbReference type="Bgee" id="ENSMUSG00000029378">
    <property type="expression patterns" value="Expressed in mucous cell of stomach and 35 other cell types or tissues"/>
</dbReference>
<dbReference type="ExpressionAtlas" id="P31955">
    <property type="expression patterns" value="baseline and differential"/>
</dbReference>
<dbReference type="GO" id="GO:0009986">
    <property type="term" value="C:cell surface"/>
    <property type="evidence" value="ECO:0007669"/>
    <property type="project" value="Ensembl"/>
</dbReference>
<dbReference type="GO" id="GO:0005737">
    <property type="term" value="C:cytoplasm"/>
    <property type="evidence" value="ECO:0000314"/>
    <property type="project" value="MGI"/>
</dbReference>
<dbReference type="GO" id="GO:0005615">
    <property type="term" value="C:extracellular space"/>
    <property type="evidence" value="ECO:0000314"/>
    <property type="project" value="MGI"/>
</dbReference>
<dbReference type="GO" id="GO:0016020">
    <property type="term" value="C:membrane"/>
    <property type="evidence" value="ECO:0007669"/>
    <property type="project" value="UniProtKB-SubCell"/>
</dbReference>
<dbReference type="GO" id="GO:0005634">
    <property type="term" value="C:nucleus"/>
    <property type="evidence" value="ECO:0000314"/>
    <property type="project" value="MGI"/>
</dbReference>
<dbReference type="GO" id="GO:0005125">
    <property type="term" value="F:cytokine activity"/>
    <property type="evidence" value="ECO:0007669"/>
    <property type="project" value="UniProtKB-KW"/>
</dbReference>
<dbReference type="GO" id="GO:0005154">
    <property type="term" value="F:epidermal growth factor receptor binding"/>
    <property type="evidence" value="ECO:0007669"/>
    <property type="project" value="Ensembl"/>
</dbReference>
<dbReference type="GO" id="GO:0008083">
    <property type="term" value="F:growth factor activity"/>
    <property type="evidence" value="ECO:0007669"/>
    <property type="project" value="UniProtKB-KW"/>
</dbReference>
<dbReference type="GO" id="GO:0048018">
    <property type="term" value="F:receptor ligand activity"/>
    <property type="evidence" value="ECO:0000316"/>
    <property type="project" value="MGI"/>
</dbReference>
<dbReference type="GO" id="GO:0030297">
    <property type="term" value="F:transmembrane receptor protein tyrosine kinase activator activity"/>
    <property type="evidence" value="ECO:0000316"/>
    <property type="project" value="MGI"/>
</dbReference>
<dbReference type="GO" id="GO:0060598">
    <property type="term" value="P:dichotomous subdivision of terminal units involved in mammary gland duct morphogenesis"/>
    <property type="evidence" value="ECO:0000315"/>
    <property type="project" value="MGI"/>
</dbReference>
<dbReference type="GO" id="GO:0007173">
    <property type="term" value="P:epidermal growth factor receptor signaling pathway"/>
    <property type="evidence" value="ECO:0000316"/>
    <property type="project" value="MGI"/>
</dbReference>
<dbReference type="GO" id="GO:0060750">
    <property type="term" value="P:epithelial cell proliferation involved in mammary gland duct elongation"/>
    <property type="evidence" value="ECO:0000315"/>
    <property type="project" value="MGI"/>
</dbReference>
<dbReference type="GO" id="GO:0038134">
    <property type="term" value="P:ERBB2-EGFR signaling pathway"/>
    <property type="evidence" value="ECO:0000266"/>
    <property type="project" value="MGI"/>
</dbReference>
<dbReference type="GO" id="GO:0007186">
    <property type="term" value="P:G protein-coupled receptor signaling pathway"/>
    <property type="evidence" value="ECO:0007669"/>
    <property type="project" value="Ensembl"/>
</dbReference>
<dbReference type="GO" id="GO:0014009">
    <property type="term" value="P:glial cell proliferation"/>
    <property type="evidence" value="ECO:0007669"/>
    <property type="project" value="Ensembl"/>
</dbReference>
<dbReference type="GO" id="GO:0060749">
    <property type="term" value="P:mammary gland alveolus development"/>
    <property type="evidence" value="ECO:0000316"/>
    <property type="project" value="MGI"/>
</dbReference>
<dbReference type="GO" id="GO:0060744">
    <property type="term" value="P:mammary gland branching involved in thelarche"/>
    <property type="evidence" value="ECO:0000315"/>
    <property type="project" value="MGI"/>
</dbReference>
<dbReference type="GO" id="GO:0045668">
    <property type="term" value="P:negative regulation of osteoblast differentiation"/>
    <property type="evidence" value="ECO:0007669"/>
    <property type="project" value="Ensembl"/>
</dbReference>
<dbReference type="GO" id="GO:0031175">
    <property type="term" value="P:neuron projection development"/>
    <property type="evidence" value="ECO:0007669"/>
    <property type="project" value="Ensembl"/>
</dbReference>
<dbReference type="GO" id="GO:0008284">
    <property type="term" value="P:positive regulation of cell population proliferation"/>
    <property type="evidence" value="ECO:0000314"/>
    <property type="project" value="MGI"/>
</dbReference>
<dbReference type="GO" id="GO:0042327">
    <property type="term" value="P:positive regulation of phosphorylation"/>
    <property type="evidence" value="ECO:0007669"/>
    <property type="project" value="Ensembl"/>
</dbReference>
<dbReference type="GO" id="GO:0051591">
    <property type="term" value="P:response to cAMP"/>
    <property type="evidence" value="ECO:0007669"/>
    <property type="project" value="Ensembl"/>
</dbReference>
<dbReference type="GO" id="GO:0032355">
    <property type="term" value="P:response to estradiol"/>
    <property type="evidence" value="ECO:0000314"/>
    <property type="project" value="MGI"/>
</dbReference>
<dbReference type="GO" id="GO:0051384">
    <property type="term" value="P:response to glucocorticoid"/>
    <property type="evidence" value="ECO:0007669"/>
    <property type="project" value="Ensembl"/>
</dbReference>
<dbReference type="GO" id="GO:0042542">
    <property type="term" value="P:response to hydrogen peroxide"/>
    <property type="evidence" value="ECO:0007669"/>
    <property type="project" value="Ensembl"/>
</dbReference>
<dbReference type="GO" id="GO:0043434">
    <property type="term" value="P:response to peptide hormone"/>
    <property type="evidence" value="ECO:0007669"/>
    <property type="project" value="Ensembl"/>
</dbReference>
<dbReference type="FunFam" id="2.10.25.10:FF:000158">
    <property type="entry name" value="proheparin-binding EGF-like growth factor"/>
    <property type="match status" value="1"/>
</dbReference>
<dbReference type="Gene3D" id="2.10.25.10">
    <property type="entry name" value="Laminin"/>
    <property type="match status" value="1"/>
</dbReference>
<dbReference type="InterPro" id="IPR000742">
    <property type="entry name" value="EGF-like_dom"/>
</dbReference>
<dbReference type="PANTHER" id="PTHR10740:SF12">
    <property type="entry name" value="AMPHIREGULIN"/>
    <property type="match status" value="1"/>
</dbReference>
<dbReference type="PANTHER" id="PTHR10740">
    <property type="entry name" value="TRANSFORMING GROWTH FACTOR ALPHA"/>
    <property type="match status" value="1"/>
</dbReference>
<dbReference type="SUPFAM" id="SSF57196">
    <property type="entry name" value="EGF/Laminin"/>
    <property type="match status" value="1"/>
</dbReference>
<dbReference type="PROSITE" id="PS00022">
    <property type="entry name" value="EGF_1"/>
    <property type="match status" value="1"/>
</dbReference>
<dbReference type="PROSITE" id="PS50026">
    <property type="entry name" value="EGF_3"/>
    <property type="match status" value="1"/>
</dbReference>